<gene>
    <name type="ORF">DDB_G0287875</name>
</gene>
<dbReference type="EMBL" id="AAFI02000104">
    <property type="protein sequence ID" value="EAS66845.1"/>
    <property type="molecule type" value="Genomic_DNA"/>
</dbReference>
<dbReference type="RefSeq" id="XP_001134528.1">
    <property type="nucleotide sequence ID" value="XM_001134528.1"/>
</dbReference>
<dbReference type="SMR" id="Q1ZXE2"/>
<dbReference type="FunCoup" id="Q1ZXE2">
    <property type="interactions" value="410"/>
</dbReference>
<dbReference type="STRING" id="44689.Q1ZXE2"/>
<dbReference type="GlyGen" id="Q1ZXE2">
    <property type="glycosylation" value="2 sites"/>
</dbReference>
<dbReference type="PaxDb" id="44689-DDB0232240"/>
<dbReference type="EnsemblProtists" id="EAS66845">
    <property type="protein sequence ID" value="EAS66845"/>
    <property type="gene ID" value="DDB_G0287875"/>
</dbReference>
<dbReference type="GeneID" id="8626273"/>
<dbReference type="KEGG" id="ddi:DDB_G0287875"/>
<dbReference type="dictyBase" id="DDB_G0287875">
    <property type="gene designation" value="dydA"/>
</dbReference>
<dbReference type="VEuPathDB" id="AmoebaDB:DDB_G0287875"/>
<dbReference type="eggNOG" id="KOG0035">
    <property type="taxonomic scope" value="Eukaryota"/>
</dbReference>
<dbReference type="HOGENOM" id="CLU_269760_0_0_1"/>
<dbReference type="InParanoid" id="Q1ZXE2"/>
<dbReference type="OMA" id="EMQYNID"/>
<dbReference type="PRO" id="PR:Q1ZXE2"/>
<dbReference type="Proteomes" id="UP000002195">
    <property type="component" value="Chromosome 5"/>
</dbReference>
<dbReference type="GO" id="GO:0015629">
    <property type="term" value="C:actin cytoskeleton"/>
    <property type="evidence" value="ECO:0000314"/>
    <property type="project" value="dictyBase"/>
</dbReference>
<dbReference type="GO" id="GO:0031252">
    <property type="term" value="C:cell leading edge"/>
    <property type="evidence" value="ECO:0000314"/>
    <property type="project" value="dictyBase"/>
</dbReference>
<dbReference type="GO" id="GO:1904269">
    <property type="term" value="C:cell leading edge cell cortex"/>
    <property type="evidence" value="ECO:0000314"/>
    <property type="project" value="dictyBase"/>
</dbReference>
<dbReference type="GO" id="GO:0005829">
    <property type="term" value="C:cytosol"/>
    <property type="evidence" value="ECO:0000314"/>
    <property type="project" value="dictyBase"/>
</dbReference>
<dbReference type="GO" id="GO:0044354">
    <property type="term" value="C:macropinosome"/>
    <property type="evidence" value="ECO:0000314"/>
    <property type="project" value="dictyBase"/>
</dbReference>
<dbReference type="GO" id="GO:0001726">
    <property type="term" value="C:ruffle"/>
    <property type="evidence" value="ECO:0000314"/>
    <property type="project" value="dictyBase"/>
</dbReference>
<dbReference type="GO" id="GO:0051020">
    <property type="term" value="F:GTPase binding"/>
    <property type="evidence" value="ECO:0000353"/>
    <property type="project" value="dictyBase"/>
</dbReference>
<dbReference type="GO" id="GO:0043327">
    <property type="term" value="P:chemotaxis to cAMP"/>
    <property type="evidence" value="ECO:0000315"/>
    <property type="project" value="dictyBase"/>
</dbReference>
<dbReference type="GO" id="GO:0030837">
    <property type="term" value="P:negative regulation of actin filament polymerization"/>
    <property type="evidence" value="ECO:0000315"/>
    <property type="project" value="dictyBase"/>
</dbReference>
<dbReference type="GO" id="GO:2000114">
    <property type="term" value="P:regulation of establishment of cell polarity"/>
    <property type="evidence" value="ECO:0000315"/>
    <property type="project" value="dictyBase"/>
</dbReference>
<dbReference type="GO" id="GO:0043520">
    <property type="term" value="P:regulation of myosin II filament assembly"/>
    <property type="evidence" value="ECO:0000315"/>
    <property type="project" value="dictyBase"/>
</dbReference>
<dbReference type="GO" id="GO:0051896">
    <property type="term" value="P:regulation of phosphatidylinositol 3-kinase/protein kinase B signal transduction"/>
    <property type="evidence" value="ECO:0000315"/>
    <property type="project" value="dictyBase"/>
</dbReference>
<dbReference type="GO" id="GO:0007165">
    <property type="term" value="P:signal transduction"/>
    <property type="evidence" value="ECO:0000315"/>
    <property type="project" value="dictyBase"/>
</dbReference>
<dbReference type="CDD" id="cd00014">
    <property type="entry name" value="CH_SF"/>
    <property type="match status" value="1"/>
</dbReference>
<dbReference type="Gene3D" id="1.10.418.10">
    <property type="entry name" value="Calponin-like domain"/>
    <property type="match status" value="2"/>
</dbReference>
<dbReference type="Gene3D" id="3.10.20.90">
    <property type="entry name" value="Phosphatidylinositol 3-kinase Catalytic Subunit, Chain A, domain 1"/>
    <property type="match status" value="1"/>
</dbReference>
<dbReference type="Gene3D" id="2.30.29.30">
    <property type="entry name" value="Pleckstrin-homology domain (PH domain)/Phosphotyrosine-binding domain (PTB)"/>
    <property type="match status" value="1"/>
</dbReference>
<dbReference type="InterPro" id="IPR001715">
    <property type="entry name" value="CH_dom"/>
</dbReference>
<dbReference type="InterPro" id="IPR036872">
    <property type="entry name" value="CH_dom_sf"/>
</dbReference>
<dbReference type="InterPro" id="IPR011993">
    <property type="entry name" value="PH-like_dom_sf"/>
</dbReference>
<dbReference type="InterPro" id="IPR001849">
    <property type="entry name" value="PH_domain"/>
</dbReference>
<dbReference type="InterPro" id="IPR000159">
    <property type="entry name" value="RA_dom"/>
</dbReference>
<dbReference type="InterPro" id="IPR029071">
    <property type="entry name" value="Ubiquitin-like_domsf"/>
</dbReference>
<dbReference type="PANTHER" id="PTHR43670">
    <property type="entry name" value="HEAT SHOCK PROTEIN 26"/>
    <property type="match status" value="1"/>
</dbReference>
<dbReference type="PANTHER" id="PTHR43670:SF131">
    <property type="entry name" value="LRRGT00202"/>
    <property type="match status" value="1"/>
</dbReference>
<dbReference type="Pfam" id="PF00307">
    <property type="entry name" value="CH"/>
    <property type="match status" value="1"/>
</dbReference>
<dbReference type="Pfam" id="PF21989">
    <property type="entry name" value="RA_2"/>
    <property type="match status" value="1"/>
</dbReference>
<dbReference type="SMART" id="SM00233">
    <property type="entry name" value="PH"/>
    <property type="match status" value="1"/>
</dbReference>
<dbReference type="SUPFAM" id="SSF47576">
    <property type="entry name" value="Calponin-homology domain, CH-domain"/>
    <property type="match status" value="1"/>
</dbReference>
<dbReference type="SUPFAM" id="SSF50729">
    <property type="entry name" value="PH domain-like"/>
    <property type="match status" value="1"/>
</dbReference>
<dbReference type="SUPFAM" id="SSF54236">
    <property type="entry name" value="Ubiquitin-like"/>
    <property type="match status" value="1"/>
</dbReference>
<dbReference type="PROSITE" id="PS50021">
    <property type="entry name" value="CH"/>
    <property type="match status" value="2"/>
</dbReference>
<dbReference type="PROSITE" id="PS50003">
    <property type="entry name" value="PH_DOMAIN"/>
    <property type="match status" value="1"/>
</dbReference>
<dbReference type="PROSITE" id="PS50200">
    <property type="entry name" value="RA"/>
    <property type="match status" value="1"/>
</dbReference>
<organism>
    <name type="scientific">Dictyostelium discoideum</name>
    <name type="common">Social amoeba</name>
    <dbReference type="NCBI Taxonomy" id="44689"/>
    <lineage>
        <taxon>Eukaryota</taxon>
        <taxon>Amoebozoa</taxon>
        <taxon>Evosea</taxon>
        <taxon>Eumycetozoa</taxon>
        <taxon>Dictyostelia</taxon>
        <taxon>Dictyosteliales</taxon>
        <taxon>Dictyosteliaceae</taxon>
        <taxon>Dictyostelium</taxon>
    </lineage>
</organism>
<feature type="chain" id="PRO_0000385366" description="PH domain-containing protein DDB_G0287875">
    <location>
        <begin position="1"/>
        <end position="1211"/>
    </location>
</feature>
<feature type="domain" description="Ras-associating 1" evidence="4">
    <location>
        <begin position="5"/>
        <end position="90"/>
    </location>
</feature>
<feature type="domain" description="PH" evidence="3">
    <location>
        <begin position="132"/>
        <end position="223"/>
    </location>
</feature>
<feature type="domain" description="Calponin-homology (CH) 1" evidence="2">
    <location>
        <begin position="277"/>
        <end position="384"/>
    </location>
</feature>
<feature type="domain" description="Calponin-homology (CH) 2" evidence="2">
    <location>
        <begin position="392"/>
        <end position="502"/>
    </location>
</feature>
<feature type="domain" description="Ras-associating 2" evidence="4">
    <location>
        <begin position="1112"/>
        <end position="1196"/>
    </location>
</feature>
<feature type="region of interest" description="Disordered" evidence="5">
    <location>
        <begin position="103"/>
        <end position="133"/>
    </location>
</feature>
<feature type="region of interest" description="Disordered" evidence="5">
    <location>
        <begin position="520"/>
        <end position="941"/>
    </location>
</feature>
<feature type="region of interest" description="Disordered" evidence="5">
    <location>
        <begin position="973"/>
        <end position="1110"/>
    </location>
</feature>
<feature type="coiled-coil region" evidence="1">
    <location>
        <begin position="527"/>
        <end position="572"/>
    </location>
</feature>
<feature type="coiled-coil region" evidence="1">
    <location>
        <begin position="703"/>
        <end position="847"/>
    </location>
</feature>
<feature type="coiled-coil region" evidence="1">
    <location>
        <begin position="880"/>
        <end position="909"/>
    </location>
</feature>
<feature type="coiled-coil region" evidence="1">
    <location>
        <begin position="1048"/>
        <end position="1076"/>
    </location>
</feature>
<feature type="compositionally biased region" description="Polar residues" evidence="5">
    <location>
        <begin position="103"/>
        <end position="112"/>
    </location>
</feature>
<feature type="compositionally biased region" description="Basic and acidic residues" evidence="5">
    <location>
        <begin position="528"/>
        <end position="565"/>
    </location>
</feature>
<feature type="compositionally biased region" description="Low complexity" evidence="5">
    <location>
        <begin position="566"/>
        <end position="596"/>
    </location>
</feature>
<feature type="compositionally biased region" description="Low complexity" evidence="5">
    <location>
        <begin position="607"/>
        <end position="646"/>
    </location>
</feature>
<feature type="compositionally biased region" description="Low complexity" evidence="5">
    <location>
        <begin position="655"/>
        <end position="668"/>
    </location>
</feature>
<feature type="compositionally biased region" description="Low complexity" evidence="5">
    <location>
        <begin position="676"/>
        <end position="691"/>
    </location>
</feature>
<feature type="compositionally biased region" description="Basic and acidic residues" evidence="5">
    <location>
        <begin position="703"/>
        <end position="729"/>
    </location>
</feature>
<feature type="compositionally biased region" description="Low complexity" evidence="5">
    <location>
        <begin position="744"/>
        <end position="753"/>
    </location>
</feature>
<feature type="compositionally biased region" description="Basic and acidic residues" evidence="5">
    <location>
        <begin position="754"/>
        <end position="778"/>
    </location>
</feature>
<feature type="compositionally biased region" description="Basic and acidic residues" evidence="5">
    <location>
        <begin position="786"/>
        <end position="853"/>
    </location>
</feature>
<feature type="compositionally biased region" description="Polar residues" evidence="5">
    <location>
        <begin position="862"/>
        <end position="877"/>
    </location>
</feature>
<feature type="compositionally biased region" description="Low complexity" evidence="5">
    <location>
        <begin position="914"/>
        <end position="936"/>
    </location>
</feature>
<feature type="compositionally biased region" description="Low complexity" evidence="5">
    <location>
        <begin position="976"/>
        <end position="1010"/>
    </location>
</feature>
<feature type="compositionally biased region" description="Polar residues" evidence="5">
    <location>
        <begin position="1032"/>
        <end position="1048"/>
    </location>
</feature>
<feature type="compositionally biased region" description="Low complexity" evidence="5">
    <location>
        <begin position="1049"/>
        <end position="1083"/>
    </location>
</feature>
<feature type="compositionally biased region" description="Basic and acidic residues" evidence="5">
    <location>
        <begin position="1093"/>
        <end position="1104"/>
    </location>
</feature>
<sequence>MEPPQKKILKVFDQDGLYKTMVIEPSSTTGEICEKFAKKLFLEDSEVVQFSLFIFEGGVRHQLKNTDFPFDYLIKYEKKDYKFFFLNPNGEFISFDKDKQVKKSQSASTSGSAPPKKEPPKPQELQQKQHISKGKSGWLLRKRPGRYDKLYSVSKADKYLRLYENEDTDNDPLYELSLENSIIELKQDLHLQLTLGNSERYIFTHESESEIVSWAQELQATMNYTPGSSSSGSKTNIIKNSSPMGGMLMGGGGGGGGYIPSTKDLGVKLQSKAENTTTLVSTLIQWVNHILEGKGIKVEETEVLSAFSDGIVFINLIEDLFNQTISYRKGKSVYEMQSNIDKCLDVLKTKCGCDYGKILSSDVSECKVAKIIVRILWSMFVGYFCNCEGKEFNMRDKLISWCSTIVLQESSKQIIVESPSSLRNPMVFAVLVNKFAGSTTLDFNALQKIKSKQDQAQQIIEAAFNYLSIPMVVDSSFWNDDQLDEKSFLIYLSFYYIYLSGQEEEKSKFLQSCINPRPSVEPEQTISIRDKQLKLMREKKEEEDRLKKEKEEKEKEEKEKLEKESSAAAAATSSIASTANSNSTEPPKPTTVPLKKTISKLPPRKLPPTVSSPTTTTTTTVPTTVPTTVTTTTTTTSPTTSPTLTPKQPIGTTIKKPATAPLKLKPVAKPLPQPTPSSSTSTTTTPTTTPSSPKPTPVPRTPQLEKEKQDRLEKARLEKEKAEKEEQEFLKQQQEEEEEEQRLLLEQQKQQQEGQERLRKEEEEQQQQRELEEKQRQIDEEEAEEEARIRELEEEARKSKERLEKARLDKLAKAQKEREDKEREEKEKKEKEERERKERKHDENDMDTFKLLEDIVSSSSSPTITPPQSLHSSQIIRTTIEEDDQTNSELEMFQNEYNRLQDEEEHINSFLKLGSSGSNNSNNNNNNNNNKSGASSVTESVTTNKHKSIDILSDNSSVLSSLDDIINSIDKKTSATTSDSFNLSTSSTSLSFLPSSPDLSTNSTFTTNNNNDDETKARSLTSKARKPLPTLTKEQQSIIDKQTGLVSKQSTNNESNEQQQQQQQQQQLQQQQSSQNSTTSISTVNPSNLSINNEEKEKESEPHKPPPKNTQGRVVVRICLEGFGDVLFCSFAIGYDTLCGTVRDMVIKKMKVSSTEEFEYSLHIVRDGLERVLDDDEILLEAEDKIDRFVFKKNDIDRRLLISNHRPVSSK</sequence>
<comment type="induction">
    <text evidence="6">Down-regulated by phagocytosis and growth on bacteria.</text>
</comment>
<accession>Q1ZXE2</accession>
<protein>
    <recommendedName>
        <fullName>PH domain-containing protein DDB_G0287875</fullName>
    </recommendedName>
</protein>
<name>Y7875_DICDI</name>
<reference key="1">
    <citation type="journal article" date="2005" name="Nature">
        <title>The genome of the social amoeba Dictyostelium discoideum.</title>
        <authorList>
            <person name="Eichinger L."/>
            <person name="Pachebat J.A."/>
            <person name="Gloeckner G."/>
            <person name="Rajandream M.A."/>
            <person name="Sucgang R."/>
            <person name="Berriman M."/>
            <person name="Song J."/>
            <person name="Olsen R."/>
            <person name="Szafranski K."/>
            <person name="Xu Q."/>
            <person name="Tunggal B."/>
            <person name="Kummerfeld S."/>
            <person name="Madera M."/>
            <person name="Konfortov B.A."/>
            <person name="Rivero F."/>
            <person name="Bankier A.T."/>
            <person name="Lehmann R."/>
            <person name="Hamlin N."/>
            <person name="Davies R."/>
            <person name="Gaudet P."/>
            <person name="Fey P."/>
            <person name="Pilcher K."/>
            <person name="Chen G."/>
            <person name="Saunders D."/>
            <person name="Sodergren E.J."/>
            <person name="Davis P."/>
            <person name="Kerhornou A."/>
            <person name="Nie X."/>
            <person name="Hall N."/>
            <person name="Anjard C."/>
            <person name="Hemphill L."/>
            <person name="Bason N."/>
            <person name="Farbrother P."/>
            <person name="Desany B."/>
            <person name="Just E."/>
            <person name="Morio T."/>
            <person name="Rost R."/>
            <person name="Churcher C.M."/>
            <person name="Cooper J."/>
            <person name="Haydock S."/>
            <person name="van Driessche N."/>
            <person name="Cronin A."/>
            <person name="Goodhead I."/>
            <person name="Muzny D.M."/>
            <person name="Mourier T."/>
            <person name="Pain A."/>
            <person name="Lu M."/>
            <person name="Harper D."/>
            <person name="Lindsay R."/>
            <person name="Hauser H."/>
            <person name="James K.D."/>
            <person name="Quiles M."/>
            <person name="Madan Babu M."/>
            <person name="Saito T."/>
            <person name="Buchrieser C."/>
            <person name="Wardroper A."/>
            <person name="Felder M."/>
            <person name="Thangavelu M."/>
            <person name="Johnson D."/>
            <person name="Knights A."/>
            <person name="Loulseged H."/>
            <person name="Mungall K.L."/>
            <person name="Oliver K."/>
            <person name="Price C."/>
            <person name="Quail M.A."/>
            <person name="Urushihara H."/>
            <person name="Hernandez J."/>
            <person name="Rabbinowitsch E."/>
            <person name="Steffen D."/>
            <person name="Sanders M."/>
            <person name="Ma J."/>
            <person name="Kohara Y."/>
            <person name="Sharp S."/>
            <person name="Simmonds M.N."/>
            <person name="Spiegler S."/>
            <person name="Tivey A."/>
            <person name="Sugano S."/>
            <person name="White B."/>
            <person name="Walker D."/>
            <person name="Woodward J.R."/>
            <person name="Winckler T."/>
            <person name="Tanaka Y."/>
            <person name="Shaulsky G."/>
            <person name="Schleicher M."/>
            <person name="Weinstock G.M."/>
            <person name="Rosenthal A."/>
            <person name="Cox E.C."/>
            <person name="Chisholm R.L."/>
            <person name="Gibbs R.A."/>
            <person name="Loomis W.F."/>
            <person name="Platzer M."/>
            <person name="Kay R.R."/>
            <person name="Williams J.G."/>
            <person name="Dear P.H."/>
            <person name="Noegel A.A."/>
            <person name="Barrell B.G."/>
            <person name="Kuspa A."/>
        </authorList>
    </citation>
    <scope>NUCLEOTIDE SEQUENCE [LARGE SCALE GENOMIC DNA]</scope>
    <source>
        <strain>AX4</strain>
    </source>
</reference>
<reference key="2">
    <citation type="journal article" date="2008" name="BMC Genomics">
        <title>Genome-wide transcriptional changes induced by phagocytosis or growth on bacteria in Dictyostelium.</title>
        <authorList>
            <person name="Sillo A."/>
            <person name="Bloomfield G."/>
            <person name="Balest A."/>
            <person name="Balbo A."/>
            <person name="Pergolizzi B."/>
            <person name="Peracino B."/>
            <person name="Skelton J."/>
            <person name="Ivens A."/>
            <person name="Bozzaro S."/>
        </authorList>
    </citation>
    <scope>INDUCTION [LARGE SCALE ANALYSIS]</scope>
</reference>
<proteinExistence type="evidence at transcript level"/>
<keyword id="KW-0175">Coiled coil</keyword>
<keyword id="KW-1185">Reference proteome</keyword>
<keyword id="KW-0677">Repeat</keyword>
<evidence type="ECO:0000255" key="1"/>
<evidence type="ECO:0000255" key="2">
    <source>
        <dbReference type="PROSITE-ProRule" id="PRU00044"/>
    </source>
</evidence>
<evidence type="ECO:0000255" key="3">
    <source>
        <dbReference type="PROSITE-ProRule" id="PRU00145"/>
    </source>
</evidence>
<evidence type="ECO:0000255" key="4">
    <source>
        <dbReference type="PROSITE-ProRule" id="PRU00166"/>
    </source>
</evidence>
<evidence type="ECO:0000256" key="5">
    <source>
        <dbReference type="SAM" id="MobiDB-lite"/>
    </source>
</evidence>
<evidence type="ECO:0000269" key="6">
    <source>
    </source>
</evidence>